<name>GCST_BORA1</name>
<reference key="1">
    <citation type="journal article" date="2006" name="J. Bacteriol.">
        <title>Comparison of the genome sequence of the poultry pathogen Bordetella avium with those of B. bronchiseptica, B. pertussis, and B. parapertussis reveals extensive diversity in surface structures associated with host interaction.</title>
        <authorList>
            <person name="Sebaihia M."/>
            <person name="Preston A."/>
            <person name="Maskell D.J."/>
            <person name="Kuzmiak H."/>
            <person name="Connell T.D."/>
            <person name="King N.D."/>
            <person name="Orndorff P.E."/>
            <person name="Miyamoto D.M."/>
            <person name="Thomson N.R."/>
            <person name="Harris D."/>
            <person name="Goble A."/>
            <person name="Lord A."/>
            <person name="Murphy L."/>
            <person name="Quail M.A."/>
            <person name="Rutter S."/>
            <person name="Squares R."/>
            <person name="Squares S."/>
            <person name="Woodward J."/>
            <person name="Parkhill J."/>
            <person name="Temple L.M."/>
        </authorList>
    </citation>
    <scope>NUCLEOTIDE SEQUENCE [LARGE SCALE GENOMIC DNA]</scope>
    <source>
        <strain>197N</strain>
    </source>
</reference>
<gene>
    <name evidence="1" type="primary">gcvT</name>
    <name type="ordered locus">BAV0491</name>
</gene>
<organism>
    <name type="scientific">Bordetella avium (strain 197N)</name>
    <dbReference type="NCBI Taxonomy" id="360910"/>
    <lineage>
        <taxon>Bacteria</taxon>
        <taxon>Pseudomonadati</taxon>
        <taxon>Pseudomonadota</taxon>
        <taxon>Betaproteobacteria</taxon>
        <taxon>Burkholderiales</taxon>
        <taxon>Alcaligenaceae</taxon>
        <taxon>Bordetella</taxon>
    </lineage>
</organism>
<dbReference type="EC" id="2.1.2.10" evidence="1"/>
<dbReference type="EMBL" id="AM167904">
    <property type="protein sequence ID" value="CAJ48096.1"/>
    <property type="molecule type" value="Genomic_DNA"/>
</dbReference>
<dbReference type="RefSeq" id="WP_012416187.1">
    <property type="nucleotide sequence ID" value="NC_010645.1"/>
</dbReference>
<dbReference type="SMR" id="Q2KYM2"/>
<dbReference type="STRING" id="360910.BAV0491"/>
<dbReference type="GeneID" id="92936331"/>
<dbReference type="KEGG" id="bav:BAV0491"/>
<dbReference type="eggNOG" id="COG0404">
    <property type="taxonomic scope" value="Bacteria"/>
</dbReference>
<dbReference type="HOGENOM" id="CLU_007884_10_2_4"/>
<dbReference type="OrthoDB" id="9774591at2"/>
<dbReference type="Proteomes" id="UP000001977">
    <property type="component" value="Chromosome"/>
</dbReference>
<dbReference type="GO" id="GO:0005829">
    <property type="term" value="C:cytosol"/>
    <property type="evidence" value="ECO:0007669"/>
    <property type="project" value="TreeGrafter"/>
</dbReference>
<dbReference type="GO" id="GO:0005960">
    <property type="term" value="C:glycine cleavage complex"/>
    <property type="evidence" value="ECO:0007669"/>
    <property type="project" value="InterPro"/>
</dbReference>
<dbReference type="GO" id="GO:0004047">
    <property type="term" value="F:aminomethyltransferase activity"/>
    <property type="evidence" value="ECO:0007669"/>
    <property type="project" value="UniProtKB-UniRule"/>
</dbReference>
<dbReference type="GO" id="GO:0008483">
    <property type="term" value="F:transaminase activity"/>
    <property type="evidence" value="ECO:0007669"/>
    <property type="project" value="UniProtKB-KW"/>
</dbReference>
<dbReference type="GO" id="GO:0019464">
    <property type="term" value="P:glycine decarboxylation via glycine cleavage system"/>
    <property type="evidence" value="ECO:0007669"/>
    <property type="project" value="UniProtKB-UniRule"/>
</dbReference>
<dbReference type="FunFam" id="3.30.70.1400:FF:000001">
    <property type="entry name" value="Aminomethyltransferase"/>
    <property type="match status" value="1"/>
</dbReference>
<dbReference type="FunFam" id="4.10.1250.10:FF:000001">
    <property type="entry name" value="Aminomethyltransferase"/>
    <property type="match status" value="1"/>
</dbReference>
<dbReference type="Gene3D" id="2.40.30.110">
    <property type="entry name" value="Aminomethyltransferase beta-barrel domains"/>
    <property type="match status" value="1"/>
</dbReference>
<dbReference type="Gene3D" id="3.30.70.1400">
    <property type="entry name" value="Aminomethyltransferase beta-barrel domains"/>
    <property type="match status" value="1"/>
</dbReference>
<dbReference type="Gene3D" id="4.10.1250.10">
    <property type="entry name" value="Aminomethyltransferase fragment"/>
    <property type="match status" value="1"/>
</dbReference>
<dbReference type="Gene3D" id="3.30.1360.120">
    <property type="entry name" value="Probable tRNA modification gtpase trme, domain 1"/>
    <property type="match status" value="1"/>
</dbReference>
<dbReference type="HAMAP" id="MF_00259">
    <property type="entry name" value="GcvT"/>
    <property type="match status" value="1"/>
</dbReference>
<dbReference type="InterPro" id="IPR006223">
    <property type="entry name" value="GCS_T"/>
</dbReference>
<dbReference type="InterPro" id="IPR022903">
    <property type="entry name" value="GCS_T_bac"/>
</dbReference>
<dbReference type="InterPro" id="IPR013977">
    <property type="entry name" value="GCST_C"/>
</dbReference>
<dbReference type="InterPro" id="IPR006222">
    <property type="entry name" value="GCV_T_N"/>
</dbReference>
<dbReference type="InterPro" id="IPR028896">
    <property type="entry name" value="GcvT/YgfZ/DmdA"/>
</dbReference>
<dbReference type="InterPro" id="IPR029043">
    <property type="entry name" value="GcvT/YgfZ_C"/>
</dbReference>
<dbReference type="InterPro" id="IPR027266">
    <property type="entry name" value="TrmE/GcvT_dom1"/>
</dbReference>
<dbReference type="NCBIfam" id="TIGR00528">
    <property type="entry name" value="gcvT"/>
    <property type="match status" value="1"/>
</dbReference>
<dbReference type="NCBIfam" id="NF001567">
    <property type="entry name" value="PRK00389.1"/>
    <property type="match status" value="1"/>
</dbReference>
<dbReference type="PANTHER" id="PTHR43757">
    <property type="entry name" value="AMINOMETHYLTRANSFERASE"/>
    <property type="match status" value="1"/>
</dbReference>
<dbReference type="PANTHER" id="PTHR43757:SF2">
    <property type="entry name" value="AMINOMETHYLTRANSFERASE, MITOCHONDRIAL"/>
    <property type="match status" value="1"/>
</dbReference>
<dbReference type="Pfam" id="PF01571">
    <property type="entry name" value="GCV_T"/>
    <property type="match status" value="1"/>
</dbReference>
<dbReference type="Pfam" id="PF08669">
    <property type="entry name" value="GCV_T_C"/>
    <property type="match status" value="1"/>
</dbReference>
<dbReference type="PIRSF" id="PIRSF006487">
    <property type="entry name" value="GcvT"/>
    <property type="match status" value="1"/>
</dbReference>
<dbReference type="SUPFAM" id="SSF101790">
    <property type="entry name" value="Aminomethyltransferase beta-barrel domain"/>
    <property type="match status" value="1"/>
</dbReference>
<dbReference type="SUPFAM" id="SSF103025">
    <property type="entry name" value="Folate-binding domain"/>
    <property type="match status" value="1"/>
</dbReference>
<keyword id="KW-0032">Aminotransferase</keyword>
<keyword id="KW-1185">Reference proteome</keyword>
<keyword id="KW-0808">Transferase</keyword>
<proteinExistence type="inferred from homology"/>
<protein>
    <recommendedName>
        <fullName evidence="1">Aminomethyltransferase</fullName>
        <ecNumber evidence="1">2.1.2.10</ecNumber>
    </recommendedName>
    <alternativeName>
        <fullName evidence="1">Glycine cleavage system T protein</fullName>
    </alternativeName>
</protein>
<evidence type="ECO:0000255" key="1">
    <source>
        <dbReference type="HAMAP-Rule" id="MF_00259"/>
    </source>
</evidence>
<feature type="chain" id="PRO_1000047647" description="Aminomethyltransferase">
    <location>
        <begin position="1"/>
        <end position="366"/>
    </location>
</feature>
<accession>Q2KYM2</accession>
<sequence length="366" mass="39328">MSASLKHTPLAETHLAAGARMVDFGGWEMPLAYGSQLEEHHAVRQDAGMFDVSHMLNADITGPDATAFLRYLVANDVARLNTPGKALYSCMLNPQGGVIDDLIIYYFAPDSWRVVVNAGTAEKDMAWMARVAAAGNFDVVITPRRDLAMIAVQGPNARAKVWAARPAWQPASEGLGPFTAAILPEDTLVARTGYTGEDGFEIVLPASAAVALWQDLVAQGVRPCGLGARDTLRLEAGMNLYGQDMDELVQPNQAGLSWTVSLKDAERRFIGRDALEQFATPCAFLGLKLSERGVMRAHMAVRTPQGMGLTTSGTMSPTLGVSIAFARLPLDVQPGSAVEVDIRGKWVPALVCKLPFVRNGKAVEHS</sequence>
<comment type="function">
    <text evidence="1">The glycine cleavage system catalyzes the degradation of glycine.</text>
</comment>
<comment type="catalytic activity">
    <reaction evidence="1">
        <text>N(6)-[(R)-S(8)-aminomethyldihydrolipoyl]-L-lysyl-[protein] + (6S)-5,6,7,8-tetrahydrofolate = N(6)-[(R)-dihydrolipoyl]-L-lysyl-[protein] + (6R)-5,10-methylene-5,6,7,8-tetrahydrofolate + NH4(+)</text>
        <dbReference type="Rhea" id="RHEA:16945"/>
        <dbReference type="Rhea" id="RHEA-COMP:10475"/>
        <dbReference type="Rhea" id="RHEA-COMP:10492"/>
        <dbReference type="ChEBI" id="CHEBI:15636"/>
        <dbReference type="ChEBI" id="CHEBI:28938"/>
        <dbReference type="ChEBI" id="CHEBI:57453"/>
        <dbReference type="ChEBI" id="CHEBI:83100"/>
        <dbReference type="ChEBI" id="CHEBI:83143"/>
        <dbReference type="EC" id="2.1.2.10"/>
    </reaction>
</comment>
<comment type="subunit">
    <text evidence="1">The glycine cleavage system is composed of four proteins: P, T, L and H.</text>
</comment>
<comment type="similarity">
    <text evidence="1">Belongs to the GcvT family.</text>
</comment>